<feature type="chain" id="PRO_0000176678" description="Large ribosomal subunit protein bL9">
    <location>
        <begin position="1"/>
        <end position="148"/>
    </location>
</feature>
<sequence length="148" mass="16454">MKVIFTQDVKGKGKKGEVKEVPVGYANNFLLKKNYAVEATPGNLKQLELQKKRAKQERQQEIEDAKALKETLSNIEVEVSAKTGEGGKLFGSVSTKQIAEALKAQHDIKIDKRKMDLPNGIHSLGYTNVPVKLDKEVEGTIRVHTVEQ</sequence>
<accession>Q6GKT0</accession>
<protein>
    <recommendedName>
        <fullName evidence="1">Large ribosomal subunit protein bL9</fullName>
    </recommendedName>
    <alternativeName>
        <fullName evidence="2">50S ribosomal protein L9</fullName>
    </alternativeName>
</protein>
<reference key="1">
    <citation type="journal article" date="2004" name="Proc. Natl. Acad. Sci. U.S.A.">
        <title>Complete genomes of two clinical Staphylococcus aureus strains: evidence for the rapid evolution of virulence and drug resistance.</title>
        <authorList>
            <person name="Holden M.T.G."/>
            <person name="Feil E.J."/>
            <person name="Lindsay J.A."/>
            <person name="Peacock S.J."/>
            <person name="Day N.P.J."/>
            <person name="Enright M.C."/>
            <person name="Foster T.J."/>
            <person name="Moore C.E."/>
            <person name="Hurst L."/>
            <person name="Atkin R."/>
            <person name="Barron A."/>
            <person name="Bason N."/>
            <person name="Bentley S.D."/>
            <person name="Chillingworth C."/>
            <person name="Chillingworth T."/>
            <person name="Churcher C."/>
            <person name="Clark L."/>
            <person name="Corton C."/>
            <person name="Cronin A."/>
            <person name="Doggett J."/>
            <person name="Dowd L."/>
            <person name="Feltwell T."/>
            <person name="Hance Z."/>
            <person name="Harris B."/>
            <person name="Hauser H."/>
            <person name="Holroyd S."/>
            <person name="Jagels K."/>
            <person name="James K.D."/>
            <person name="Lennard N."/>
            <person name="Line A."/>
            <person name="Mayes R."/>
            <person name="Moule S."/>
            <person name="Mungall K."/>
            <person name="Ormond D."/>
            <person name="Quail M.A."/>
            <person name="Rabbinowitsch E."/>
            <person name="Rutherford K.M."/>
            <person name="Sanders M."/>
            <person name="Sharp S."/>
            <person name="Simmonds M."/>
            <person name="Stevens K."/>
            <person name="Whitehead S."/>
            <person name="Barrell B.G."/>
            <person name="Spratt B.G."/>
            <person name="Parkhill J."/>
        </authorList>
    </citation>
    <scope>NUCLEOTIDE SEQUENCE [LARGE SCALE GENOMIC DNA]</scope>
    <source>
        <strain>MRSA252</strain>
    </source>
</reference>
<dbReference type="EMBL" id="BX571856">
    <property type="protein sequence ID" value="CAG39043.1"/>
    <property type="molecule type" value="Genomic_DNA"/>
</dbReference>
<dbReference type="RefSeq" id="WP_000864305.1">
    <property type="nucleotide sequence ID" value="NC_002952.2"/>
</dbReference>
<dbReference type="SMR" id="Q6GKT0"/>
<dbReference type="KEGG" id="sar:SAR0015"/>
<dbReference type="HOGENOM" id="CLU_078938_3_2_9"/>
<dbReference type="Proteomes" id="UP000000596">
    <property type="component" value="Chromosome"/>
</dbReference>
<dbReference type="GO" id="GO:1990904">
    <property type="term" value="C:ribonucleoprotein complex"/>
    <property type="evidence" value="ECO:0007669"/>
    <property type="project" value="UniProtKB-KW"/>
</dbReference>
<dbReference type="GO" id="GO:0005840">
    <property type="term" value="C:ribosome"/>
    <property type="evidence" value="ECO:0007669"/>
    <property type="project" value="UniProtKB-KW"/>
</dbReference>
<dbReference type="GO" id="GO:0019843">
    <property type="term" value="F:rRNA binding"/>
    <property type="evidence" value="ECO:0007669"/>
    <property type="project" value="UniProtKB-UniRule"/>
</dbReference>
<dbReference type="GO" id="GO:0003735">
    <property type="term" value="F:structural constituent of ribosome"/>
    <property type="evidence" value="ECO:0007669"/>
    <property type="project" value="InterPro"/>
</dbReference>
<dbReference type="GO" id="GO:0006412">
    <property type="term" value="P:translation"/>
    <property type="evidence" value="ECO:0007669"/>
    <property type="project" value="UniProtKB-UniRule"/>
</dbReference>
<dbReference type="FunFam" id="3.10.430.100:FF:000002">
    <property type="entry name" value="50S ribosomal protein L9"/>
    <property type="match status" value="1"/>
</dbReference>
<dbReference type="FunFam" id="3.40.5.10:FF:000002">
    <property type="entry name" value="50S ribosomal protein L9"/>
    <property type="match status" value="1"/>
</dbReference>
<dbReference type="Gene3D" id="3.10.430.100">
    <property type="entry name" value="Ribosomal protein L9, C-terminal domain"/>
    <property type="match status" value="1"/>
</dbReference>
<dbReference type="Gene3D" id="3.40.5.10">
    <property type="entry name" value="Ribosomal protein L9, N-terminal domain"/>
    <property type="match status" value="1"/>
</dbReference>
<dbReference type="HAMAP" id="MF_00503">
    <property type="entry name" value="Ribosomal_bL9"/>
    <property type="match status" value="1"/>
</dbReference>
<dbReference type="InterPro" id="IPR000244">
    <property type="entry name" value="Ribosomal_bL9"/>
</dbReference>
<dbReference type="InterPro" id="IPR009027">
    <property type="entry name" value="Ribosomal_bL9/RNase_H1_N"/>
</dbReference>
<dbReference type="InterPro" id="IPR020594">
    <property type="entry name" value="Ribosomal_bL9_bac/chp"/>
</dbReference>
<dbReference type="InterPro" id="IPR020069">
    <property type="entry name" value="Ribosomal_bL9_C"/>
</dbReference>
<dbReference type="InterPro" id="IPR036791">
    <property type="entry name" value="Ribosomal_bL9_C_sf"/>
</dbReference>
<dbReference type="InterPro" id="IPR020070">
    <property type="entry name" value="Ribosomal_bL9_N"/>
</dbReference>
<dbReference type="InterPro" id="IPR036935">
    <property type="entry name" value="Ribosomal_bL9_N_sf"/>
</dbReference>
<dbReference type="NCBIfam" id="TIGR00158">
    <property type="entry name" value="L9"/>
    <property type="match status" value="1"/>
</dbReference>
<dbReference type="PANTHER" id="PTHR21368">
    <property type="entry name" value="50S RIBOSOMAL PROTEIN L9"/>
    <property type="match status" value="1"/>
</dbReference>
<dbReference type="Pfam" id="PF03948">
    <property type="entry name" value="Ribosomal_L9_C"/>
    <property type="match status" value="1"/>
</dbReference>
<dbReference type="Pfam" id="PF01281">
    <property type="entry name" value="Ribosomal_L9_N"/>
    <property type="match status" value="1"/>
</dbReference>
<dbReference type="SUPFAM" id="SSF55658">
    <property type="entry name" value="L9 N-domain-like"/>
    <property type="match status" value="1"/>
</dbReference>
<dbReference type="SUPFAM" id="SSF55653">
    <property type="entry name" value="Ribosomal protein L9 C-domain"/>
    <property type="match status" value="1"/>
</dbReference>
<dbReference type="PROSITE" id="PS00651">
    <property type="entry name" value="RIBOSOMAL_L9"/>
    <property type="match status" value="1"/>
</dbReference>
<comment type="function">
    <text evidence="1">Binds to the 23S rRNA.</text>
</comment>
<comment type="similarity">
    <text evidence="1">Belongs to the bacterial ribosomal protein bL9 family.</text>
</comment>
<evidence type="ECO:0000255" key="1">
    <source>
        <dbReference type="HAMAP-Rule" id="MF_00503"/>
    </source>
</evidence>
<evidence type="ECO:0000305" key="2"/>
<gene>
    <name evidence="1" type="primary">rplI</name>
    <name type="ordered locus">SAR0015</name>
</gene>
<proteinExistence type="inferred from homology"/>
<organism>
    <name type="scientific">Staphylococcus aureus (strain MRSA252)</name>
    <dbReference type="NCBI Taxonomy" id="282458"/>
    <lineage>
        <taxon>Bacteria</taxon>
        <taxon>Bacillati</taxon>
        <taxon>Bacillota</taxon>
        <taxon>Bacilli</taxon>
        <taxon>Bacillales</taxon>
        <taxon>Staphylococcaceae</taxon>
        <taxon>Staphylococcus</taxon>
    </lineage>
</organism>
<name>RL9_STAAR</name>
<keyword id="KW-0687">Ribonucleoprotein</keyword>
<keyword id="KW-0689">Ribosomal protein</keyword>
<keyword id="KW-0694">RNA-binding</keyword>
<keyword id="KW-0699">rRNA-binding</keyword>